<dbReference type="EC" id="2.4.1.-"/>
<dbReference type="EMBL" id="AL035602">
    <property type="protein sequence ID" value="CAB38269.1"/>
    <property type="molecule type" value="Genomic_DNA"/>
</dbReference>
<dbReference type="EMBL" id="AL161571">
    <property type="protein sequence ID" value="CAB81407.1"/>
    <property type="molecule type" value="Genomic_DNA"/>
</dbReference>
<dbReference type="EMBL" id="CP002687">
    <property type="protein sequence ID" value="AEE85358.1"/>
    <property type="molecule type" value="Genomic_DNA"/>
</dbReference>
<dbReference type="EMBL" id="AK118476">
    <property type="protein sequence ID" value="BAC43080.1"/>
    <property type="molecule type" value="mRNA"/>
</dbReference>
<dbReference type="EMBL" id="BT005370">
    <property type="protein sequence ID" value="AAO63434.1"/>
    <property type="molecule type" value="mRNA"/>
</dbReference>
<dbReference type="PIR" id="T05862">
    <property type="entry name" value="T05862"/>
</dbReference>
<dbReference type="RefSeq" id="NP_194487.1">
    <property type="nucleotide sequence ID" value="NM_118892.3"/>
</dbReference>
<dbReference type="SMR" id="Q9T081"/>
<dbReference type="FunCoup" id="Q9T081">
    <property type="interactions" value="10"/>
</dbReference>
<dbReference type="STRING" id="3702.Q9T081"/>
<dbReference type="CAZy" id="GT1">
    <property type="family name" value="Glycosyltransferase Family 1"/>
</dbReference>
<dbReference type="PaxDb" id="3702-AT4G27570.1"/>
<dbReference type="ProteomicsDB" id="228654"/>
<dbReference type="EnsemblPlants" id="AT4G27570.1">
    <property type="protein sequence ID" value="AT4G27570.1"/>
    <property type="gene ID" value="AT4G27570"/>
</dbReference>
<dbReference type="GeneID" id="828866"/>
<dbReference type="Gramene" id="AT4G27570.1">
    <property type="protein sequence ID" value="AT4G27570.1"/>
    <property type="gene ID" value="AT4G27570"/>
</dbReference>
<dbReference type="KEGG" id="ath:AT4G27570"/>
<dbReference type="Araport" id="AT4G27570"/>
<dbReference type="TAIR" id="AT4G27570">
    <property type="gene designation" value="UGT79B3"/>
</dbReference>
<dbReference type="eggNOG" id="KOG1192">
    <property type="taxonomic scope" value="Eukaryota"/>
</dbReference>
<dbReference type="HOGENOM" id="CLU_001724_2_3_1"/>
<dbReference type="InParanoid" id="Q9T081"/>
<dbReference type="PhylomeDB" id="Q9T081"/>
<dbReference type="BioCyc" id="ARA:AT4G27570-MONOMER"/>
<dbReference type="PRO" id="PR:Q9T081"/>
<dbReference type="Proteomes" id="UP000006548">
    <property type="component" value="Chromosome 4"/>
</dbReference>
<dbReference type="ExpressionAtlas" id="Q9T081">
    <property type="expression patterns" value="baseline and differential"/>
</dbReference>
<dbReference type="GO" id="GO:0035251">
    <property type="term" value="F:UDP-glucosyltransferase activity"/>
    <property type="evidence" value="ECO:0007669"/>
    <property type="project" value="InterPro"/>
</dbReference>
<dbReference type="GO" id="GO:0008194">
    <property type="term" value="F:UDP-glycosyltransferase activity"/>
    <property type="evidence" value="ECO:0000314"/>
    <property type="project" value="TAIR"/>
</dbReference>
<dbReference type="GO" id="GO:0046283">
    <property type="term" value="P:anthocyanin-containing compound metabolic process"/>
    <property type="evidence" value="ECO:0000315"/>
    <property type="project" value="TAIR"/>
</dbReference>
<dbReference type="CDD" id="cd03784">
    <property type="entry name" value="GT1_Gtf-like"/>
    <property type="match status" value="1"/>
</dbReference>
<dbReference type="FunFam" id="3.40.50.2000:FF:000037">
    <property type="entry name" value="Glycosyltransferase"/>
    <property type="match status" value="1"/>
</dbReference>
<dbReference type="FunFam" id="3.40.50.2000:FF:000087">
    <property type="entry name" value="Glycosyltransferase"/>
    <property type="match status" value="1"/>
</dbReference>
<dbReference type="Gene3D" id="3.40.50.2000">
    <property type="entry name" value="Glycogen Phosphorylase B"/>
    <property type="match status" value="2"/>
</dbReference>
<dbReference type="InterPro" id="IPR050481">
    <property type="entry name" value="UDP-glycosyltransf_plant"/>
</dbReference>
<dbReference type="InterPro" id="IPR002213">
    <property type="entry name" value="UDP_glucos_trans"/>
</dbReference>
<dbReference type="InterPro" id="IPR035595">
    <property type="entry name" value="UDP_glycos_trans_CS"/>
</dbReference>
<dbReference type="PANTHER" id="PTHR48049:SF176">
    <property type="entry name" value="ANTHOCYANIDIN 3-O-GLUCOSIDE 2'''-O-XYLOSYLTRANSFERASE-RELATED"/>
    <property type="match status" value="1"/>
</dbReference>
<dbReference type="PANTHER" id="PTHR48049">
    <property type="entry name" value="GLYCOSYLTRANSFERASE"/>
    <property type="match status" value="1"/>
</dbReference>
<dbReference type="Pfam" id="PF00201">
    <property type="entry name" value="UDPGT"/>
    <property type="match status" value="1"/>
</dbReference>
<dbReference type="SUPFAM" id="SSF53756">
    <property type="entry name" value="UDP-Glycosyltransferase/glycogen phosphorylase"/>
    <property type="match status" value="1"/>
</dbReference>
<dbReference type="PROSITE" id="PS00375">
    <property type="entry name" value="UDPGT"/>
    <property type="match status" value="1"/>
</dbReference>
<organism>
    <name type="scientific">Arabidopsis thaliana</name>
    <name type="common">Mouse-ear cress</name>
    <dbReference type="NCBI Taxonomy" id="3702"/>
    <lineage>
        <taxon>Eukaryota</taxon>
        <taxon>Viridiplantae</taxon>
        <taxon>Streptophyta</taxon>
        <taxon>Embryophyta</taxon>
        <taxon>Tracheophyta</taxon>
        <taxon>Spermatophyta</taxon>
        <taxon>Magnoliopsida</taxon>
        <taxon>eudicotyledons</taxon>
        <taxon>Gunneridae</taxon>
        <taxon>Pentapetalae</taxon>
        <taxon>rosids</taxon>
        <taxon>malvids</taxon>
        <taxon>Brassicales</taxon>
        <taxon>Brassicaceae</taxon>
        <taxon>Camelineae</taxon>
        <taxon>Arabidopsis</taxon>
    </lineage>
</organism>
<name>U79B3_ARATH</name>
<accession>Q9T081</accession>
<sequence length="453" mass="50360">MGGLKFHVLMYPWFATGHMTPFLFLANKLAEKGHTVTFLLPKKSLKQLEHFNLFPHNIVFRSVTVPHVDGLPVGTETASEIPVTSTDLLMSAMDLTRDQVEAVVRAVEPDLIFFDFAHWIPEVARDFGLKTVKYVVVSASTIASMLVPGGELGVPPPGYPSSKVLLRKQDAYTMKKLEPTNTIDVGPNLLERVTTSLMNSDVIAIRTAREIEGNFCDYIEKHCRKKVLLTGPVFPEPDKTRELEERWVKWLSGYEPDSVVFCALGSQVILEKDQFQELCLGMELTGSPFLVAVKPPRGSSTIQEALPEGFEERVKGRGLVWGGWVQQPLILSHPSVGCFVSHCGFGSMWESLLSDCQIVLVPQLGDQVLNTRLLSDELKVSVEVAREETGWFSKESLCDAVNSVMKRDSELGNLVRKNHTKWRETVASPGLMTGYVDAFVESLQDLVSGTTHD</sequence>
<proteinExistence type="evidence at transcript level"/>
<comment type="similarity">
    <text evidence="2">Belongs to the UDP-glycosyltransferase family.</text>
</comment>
<keyword id="KW-0328">Glycosyltransferase</keyword>
<keyword id="KW-1185">Reference proteome</keyword>
<keyword id="KW-0808">Transferase</keyword>
<gene>
    <name type="primary">UGT79B3</name>
    <name type="ordered locus">At4g27570</name>
    <name type="ORF">T29A15.60</name>
</gene>
<reference key="1">
    <citation type="journal article" date="1999" name="Nature">
        <title>Sequence and analysis of chromosome 4 of the plant Arabidopsis thaliana.</title>
        <authorList>
            <person name="Mayer K.F.X."/>
            <person name="Schueller C."/>
            <person name="Wambutt R."/>
            <person name="Murphy G."/>
            <person name="Volckaert G."/>
            <person name="Pohl T."/>
            <person name="Duesterhoeft A."/>
            <person name="Stiekema W."/>
            <person name="Entian K.-D."/>
            <person name="Terryn N."/>
            <person name="Harris B."/>
            <person name="Ansorge W."/>
            <person name="Brandt P."/>
            <person name="Grivell L.A."/>
            <person name="Rieger M."/>
            <person name="Weichselgartner M."/>
            <person name="de Simone V."/>
            <person name="Obermaier B."/>
            <person name="Mache R."/>
            <person name="Mueller M."/>
            <person name="Kreis M."/>
            <person name="Delseny M."/>
            <person name="Puigdomenech P."/>
            <person name="Watson M."/>
            <person name="Schmidtheini T."/>
            <person name="Reichert B."/>
            <person name="Portetelle D."/>
            <person name="Perez-Alonso M."/>
            <person name="Boutry M."/>
            <person name="Bancroft I."/>
            <person name="Vos P."/>
            <person name="Hoheisel J."/>
            <person name="Zimmermann W."/>
            <person name="Wedler H."/>
            <person name="Ridley P."/>
            <person name="Langham S.-A."/>
            <person name="McCullagh B."/>
            <person name="Bilham L."/>
            <person name="Robben J."/>
            <person name="van der Schueren J."/>
            <person name="Grymonprez B."/>
            <person name="Chuang Y.-J."/>
            <person name="Vandenbussche F."/>
            <person name="Braeken M."/>
            <person name="Weltjens I."/>
            <person name="Voet M."/>
            <person name="Bastiaens I."/>
            <person name="Aert R."/>
            <person name="Defoor E."/>
            <person name="Weitzenegger T."/>
            <person name="Bothe G."/>
            <person name="Ramsperger U."/>
            <person name="Hilbert H."/>
            <person name="Braun M."/>
            <person name="Holzer E."/>
            <person name="Brandt A."/>
            <person name="Peters S."/>
            <person name="van Staveren M."/>
            <person name="Dirkse W."/>
            <person name="Mooijman P."/>
            <person name="Klein Lankhorst R."/>
            <person name="Rose M."/>
            <person name="Hauf J."/>
            <person name="Koetter P."/>
            <person name="Berneiser S."/>
            <person name="Hempel S."/>
            <person name="Feldpausch M."/>
            <person name="Lamberth S."/>
            <person name="Van den Daele H."/>
            <person name="De Keyser A."/>
            <person name="Buysshaert C."/>
            <person name="Gielen J."/>
            <person name="Villarroel R."/>
            <person name="De Clercq R."/>
            <person name="van Montagu M."/>
            <person name="Rogers J."/>
            <person name="Cronin A."/>
            <person name="Quail M.A."/>
            <person name="Bray-Allen S."/>
            <person name="Clark L."/>
            <person name="Doggett J."/>
            <person name="Hall S."/>
            <person name="Kay M."/>
            <person name="Lennard N."/>
            <person name="McLay K."/>
            <person name="Mayes R."/>
            <person name="Pettett A."/>
            <person name="Rajandream M.A."/>
            <person name="Lyne M."/>
            <person name="Benes V."/>
            <person name="Rechmann S."/>
            <person name="Borkova D."/>
            <person name="Bloecker H."/>
            <person name="Scharfe M."/>
            <person name="Grimm M."/>
            <person name="Loehnert T.-H."/>
            <person name="Dose S."/>
            <person name="de Haan M."/>
            <person name="Maarse A.C."/>
            <person name="Schaefer M."/>
            <person name="Mueller-Auer S."/>
            <person name="Gabel C."/>
            <person name="Fuchs M."/>
            <person name="Fartmann B."/>
            <person name="Granderath K."/>
            <person name="Dauner D."/>
            <person name="Herzl A."/>
            <person name="Neumann S."/>
            <person name="Argiriou A."/>
            <person name="Vitale D."/>
            <person name="Liguori R."/>
            <person name="Piravandi E."/>
            <person name="Massenet O."/>
            <person name="Quigley F."/>
            <person name="Clabauld G."/>
            <person name="Muendlein A."/>
            <person name="Felber R."/>
            <person name="Schnabl S."/>
            <person name="Hiller R."/>
            <person name="Schmidt W."/>
            <person name="Lecharny A."/>
            <person name="Aubourg S."/>
            <person name="Chefdor F."/>
            <person name="Cooke R."/>
            <person name="Berger C."/>
            <person name="Monfort A."/>
            <person name="Casacuberta E."/>
            <person name="Gibbons T."/>
            <person name="Weber N."/>
            <person name="Vandenbol M."/>
            <person name="Bargues M."/>
            <person name="Terol J."/>
            <person name="Torres A."/>
            <person name="Perez-Perez A."/>
            <person name="Purnelle B."/>
            <person name="Bent E."/>
            <person name="Johnson S."/>
            <person name="Tacon D."/>
            <person name="Jesse T."/>
            <person name="Heijnen L."/>
            <person name="Schwarz S."/>
            <person name="Scholler P."/>
            <person name="Heber S."/>
            <person name="Francs P."/>
            <person name="Bielke C."/>
            <person name="Frishman D."/>
            <person name="Haase D."/>
            <person name="Lemcke K."/>
            <person name="Mewes H.-W."/>
            <person name="Stocker S."/>
            <person name="Zaccaria P."/>
            <person name="Bevan M."/>
            <person name="Wilson R.K."/>
            <person name="de la Bastide M."/>
            <person name="Habermann K."/>
            <person name="Parnell L."/>
            <person name="Dedhia N."/>
            <person name="Gnoj L."/>
            <person name="Schutz K."/>
            <person name="Huang E."/>
            <person name="Spiegel L."/>
            <person name="Sekhon M."/>
            <person name="Murray J."/>
            <person name="Sheet P."/>
            <person name="Cordes M."/>
            <person name="Abu-Threideh J."/>
            <person name="Stoneking T."/>
            <person name="Kalicki J."/>
            <person name="Graves T."/>
            <person name="Harmon G."/>
            <person name="Edwards J."/>
            <person name="Latreille P."/>
            <person name="Courtney L."/>
            <person name="Cloud J."/>
            <person name="Abbott A."/>
            <person name="Scott K."/>
            <person name="Johnson D."/>
            <person name="Minx P."/>
            <person name="Bentley D."/>
            <person name="Fulton B."/>
            <person name="Miller N."/>
            <person name="Greco T."/>
            <person name="Kemp K."/>
            <person name="Kramer J."/>
            <person name="Fulton L."/>
            <person name="Mardis E."/>
            <person name="Dante M."/>
            <person name="Pepin K."/>
            <person name="Hillier L.W."/>
            <person name="Nelson J."/>
            <person name="Spieth J."/>
            <person name="Ryan E."/>
            <person name="Andrews S."/>
            <person name="Geisel C."/>
            <person name="Layman D."/>
            <person name="Du H."/>
            <person name="Ali J."/>
            <person name="Berghoff A."/>
            <person name="Jones K."/>
            <person name="Drone K."/>
            <person name="Cotton M."/>
            <person name="Joshu C."/>
            <person name="Antonoiu B."/>
            <person name="Zidanic M."/>
            <person name="Strong C."/>
            <person name="Sun H."/>
            <person name="Lamar B."/>
            <person name="Yordan C."/>
            <person name="Ma P."/>
            <person name="Zhong J."/>
            <person name="Preston R."/>
            <person name="Vil D."/>
            <person name="Shekher M."/>
            <person name="Matero A."/>
            <person name="Shah R."/>
            <person name="Swaby I.K."/>
            <person name="O'Shaughnessy A."/>
            <person name="Rodriguez M."/>
            <person name="Hoffman J."/>
            <person name="Till S."/>
            <person name="Granat S."/>
            <person name="Shohdy N."/>
            <person name="Hasegawa A."/>
            <person name="Hameed A."/>
            <person name="Lodhi M."/>
            <person name="Johnson A."/>
            <person name="Chen E."/>
            <person name="Marra M.A."/>
            <person name="Martienssen R."/>
            <person name="McCombie W.R."/>
        </authorList>
    </citation>
    <scope>NUCLEOTIDE SEQUENCE [LARGE SCALE GENOMIC DNA]</scope>
    <source>
        <strain>cv. Columbia</strain>
    </source>
</reference>
<reference key="2">
    <citation type="journal article" date="2017" name="Plant J.">
        <title>Araport11: a complete reannotation of the Arabidopsis thaliana reference genome.</title>
        <authorList>
            <person name="Cheng C.Y."/>
            <person name="Krishnakumar V."/>
            <person name="Chan A.P."/>
            <person name="Thibaud-Nissen F."/>
            <person name="Schobel S."/>
            <person name="Town C.D."/>
        </authorList>
    </citation>
    <scope>GENOME REANNOTATION</scope>
    <source>
        <strain>cv. Columbia</strain>
    </source>
</reference>
<reference key="3">
    <citation type="journal article" date="2002" name="Science">
        <title>Functional annotation of a full-length Arabidopsis cDNA collection.</title>
        <authorList>
            <person name="Seki M."/>
            <person name="Narusaka M."/>
            <person name="Kamiya A."/>
            <person name="Ishida J."/>
            <person name="Satou M."/>
            <person name="Sakurai T."/>
            <person name="Nakajima M."/>
            <person name="Enju A."/>
            <person name="Akiyama K."/>
            <person name="Oono Y."/>
            <person name="Muramatsu M."/>
            <person name="Hayashizaki Y."/>
            <person name="Kawai J."/>
            <person name="Carninci P."/>
            <person name="Itoh M."/>
            <person name="Ishii Y."/>
            <person name="Arakawa T."/>
            <person name="Shibata K."/>
            <person name="Shinagawa A."/>
            <person name="Shinozaki K."/>
        </authorList>
    </citation>
    <scope>NUCLEOTIDE SEQUENCE [LARGE SCALE MRNA]</scope>
    <source>
        <strain>cv. Columbia</strain>
    </source>
</reference>
<reference key="4">
    <citation type="journal article" date="2003" name="Science">
        <title>Empirical analysis of transcriptional activity in the Arabidopsis genome.</title>
        <authorList>
            <person name="Yamada K."/>
            <person name="Lim J."/>
            <person name="Dale J.M."/>
            <person name="Chen H."/>
            <person name="Shinn P."/>
            <person name="Palm C.J."/>
            <person name="Southwick A.M."/>
            <person name="Wu H.C."/>
            <person name="Kim C.J."/>
            <person name="Nguyen M."/>
            <person name="Pham P.K."/>
            <person name="Cheuk R.F."/>
            <person name="Karlin-Newmann G."/>
            <person name="Liu S.X."/>
            <person name="Lam B."/>
            <person name="Sakano H."/>
            <person name="Wu T."/>
            <person name="Yu G."/>
            <person name="Miranda M."/>
            <person name="Quach H.L."/>
            <person name="Tripp M."/>
            <person name="Chang C.H."/>
            <person name="Lee J.M."/>
            <person name="Toriumi M.J."/>
            <person name="Chan M.M."/>
            <person name="Tang C.C."/>
            <person name="Onodera C.S."/>
            <person name="Deng J.M."/>
            <person name="Akiyama K."/>
            <person name="Ansari Y."/>
            <person name="Arakawa T."/>
            <person name="Banh J."/>
            <person name="Banno F."/>
            <person name="Bowser L."/>
            <person name="Brooks S.Y."/>
            <person name="Carninci P."/>
            <person name="Chao Q."/>
            <person name="Choy N."/>
            <person name="Enju A."/>
            <person name="Goldsmith A.D."/>
            <person name="Gurjal M."/>
            <person name="Hansen N.F."/>
            <person name="Hayashizaki Y."/>
            <person name="Johnson-Hopson C."/>
            <person name="Hsuan V.W."/>
            <person name="Iida K."/>
            <person name="Karnes M."/>
            <person name="Khan S."/>
            <person name="Koesema E."/>
            <person name="Ishida J."/>
            <person name="Jiang P.X."/>
            <person name="Jones T."/>
            <person name="Kawai J."/>
            <person name="Kamiya A."/>
            <person name="Meyers C."/>
            <person name="Nakajima M."/>
            <person name="Narusaka M."/>
            <person name="Seki M."/>
            <person name="Sakurai T."/>
            <person name="Satou M."/>
            <person name="Tamse R."/>
            <person name="Vaysberg M."/>
            <person name="Wallender E.K."/>
            <person name="Wong C."/>
            <person name="Yamamura Y."/>
            <person name="Yuan S."/>
            <person name="Shinozaki K."/>
            <person name="Davis R.W."/>
            <person name="Theologis A."/>
            <person name="Ecker J.R."/>
        </authorList>
    </citation>
    <scope>NUCLEOTIDE SEQUENCE [LARGE SCALE MRNA]</scope>
    <source>
        <strain>cv. Columbia</strain>
    </source>
</reference>
<reference key="5">
    <citation type="journal article" date="2001" name="J. Biol. Chem.">
        <title>Phylogenetic analysis of the UDP-glycosyltransferase multigene family of Arabidopsis thaliana.</title>
        <authorList>
            <person name="Li Y."/>
            <person name="Baldauf S."/>
            <person name="Lim E.K."/>
            <person name="Bowles D.J."/>
        </authorList>
    </citation>
    <scope>GENE FAMILY</scope>
</reference>
<protein>
    <recommendedName>
        <fullName>UDP-glycosyltransferase 79B3</fullName>
        <ecNumber>2.4.1.-</ecNumber>
    </recommendedName>
</protein>
<feature type="chain" id="PRO_0000409109" description="UDP-glycosyltransferase 79B3">
    <location>
        <begin position="1"/>
        <end position="453"/>
    </location>
</feature>
<feature type="binding site" evidence="1">
    <location>
        <position position="266"/>
    </location>
    <ligand>
        <name>UDP-alpha-D-glucose</name>
        <dbReference type="ChEBI" id="CHEBI:58885"/>
    </ligand>
</feature>
<feature type="binding site" evidence="1">
    <location>
        <begin position="325"/>
        <end position="327"/>
    </location>
    <ligand>
        <name>UDP-alpha-D-glucose</name>
        <dbReference type="ChEBI" id="CHEBI:58885"/>
    </ligand>
</feature>
<feature type="binding site" evidence="1">
    <location>
        <begin position="342"/>
        <end position="350"/>
    </location>
    <ligand>
        <name>UDP-alpha-D-glucose</name>
        <dbReference type="ChEBI" id="CHEBI:58885"/>
    </ligand>
</feature>
<feature type="binding site" evidence="1">
    <location>
        <begin position="364"/>
        <end position="367"/>
    </location>
    <ligand>
        <name>UDP-alpha-D-glucose</name>
        <dbReference type="ChEBI" id="CHEBI:58885"/>
    </ligand>
</feature>
<evidence type="ECO:0000250" key="1"/>
<evidence type="ECO:0000305" key="2"/>